<organism>
    <name type="scientific">Locusta migratoria</name>
    <name type="common">Migratory locust</name>
    <dbReference type="NCBI Taxonomy" id="7004"/>
    <lineage>
        <taxon>Eukaryota</taxon>
        <taxon>Metazoa</taxon>
        <taxon>Ecdysozoa</taxon>
        <taxon>Arthropoda</taxon>
        <taxon>Hexapoda</taxon>
        <taxon>Insecta</taxon>
        <taxon>Pterygota</taxon>
        <taxon>Neoptera</taxon>
        <taxon>Polyneoptera</taxon>
        <taxon>Orthoptera</taxon>
        <taxon>Caelifera</taxon>
        <taxon>Acrididea</taxon>
        <taxon>Acridomorpha</taxon>
        <taxon>Acridoidea</taxon>
        <taxon>Acrididae</taxon>
        <taxon>Oedipodinae</taxon>
        <taxon>Locusta</taxon>
    </lineage>
</organism>
<name>OAR1_LOCMI</name>
<feature type="chain" id="PRO_0000069954" description="Tyramine receptor 1">
    <location>
        <begin position="1"/>
        <end position="484"/>
    </location>
</feature>
<feature type="topological domain" description="Extracellular" evidence="1">
    <location>
        <begin position="1"/>
        <end position="54"/>
    </location>
</feature>
<feature type="transmembrane region" description="Helical; Name=1" evidence="1">
    <location>
        <begin position="55"/>
        <end position="77"/>
    </location>
</feature>
<feature type="topological domain" description="Cytoplasmic" evidence="1">
    <location>
        <begin position="78"/>
        <end position="87"/>
    </location>
</feature>
<feature type="transmembrane region" description="Helical; Name=2" evidence="1">
    <location>
        <begin position="88"/>
        <end position="109"/>
    </location>
</feature>
<feature type="topological domain" description="Extracellular" evidence="1">
    <location>
        <begin position="110"/>
        <end position="126"/>
    </location>
</feature>
<feature type="transmembrane region" description="Helical; Name=3" evidence="1">
    <location>
        <begin position="127"/>
        <end position="147"/>
    </location>
</feature>
<feature type="topological domain" description="Cytoplasmic" evidence="1">
    <location>
        <begin position="148"/>
        <end position="167"/>
    </location>
</feature>
<feature type="transmembrane region" description="Helical; Name=4" evidence="1">
    <location>
        <begin position="168"/>
        <end position="190"/>
    </location>
</feature>
<feature type="topological domain" description="Extracellular" evidence="1">
    <location>
        <begin position="191"/>
        <end position="215"/>
    </location>
</feature>
<feature type="transmembrane region" description="Helical; Name=5" evidence="1">
    <location>
        <begin position="216"/>
        <end position="237"/>
    </location>
</feature>
<feature type="topological domain" description="Cytoplasmic" evidence="1">
    <location>
        <begin position="238"/>
        <end position="411"/>
    </location>
</feature>
<feature type="transmembrane region" description="Helical; Name=6" evidence="1">
    <location>
        <begin position="412"/>
        <end position="433"/>
    </location>
</feature>
<feature type="topological domain" description="Extracellular" evidence="1">
    <location>
        <begin position="434"/>
        <end position="448"/>
    </location>
</feature>
<feature type="transmembrane region" description="Helical; Name=7" evidence="1">
    <location>
        <begin position="449"/>
        <end position="470"/>
    </location>
</feature>
<feature type="topological domain" description="Cytoplasmic" evidence="1">
    <location>
        <begin position="471"/>
        <end position="484"/>
    </location>
</feature>
<feature type="region of interest" description="Disordered" evidence="3">
    <location>
        <begin position="253"/>
        <end position="322"/>
    </location>
</feature>
<feature type="region of interest" description="Disordered" evidence="3">
    <location>
        <begin position="358"/>
        <end position="383"/>
    </location>
</feature>
<feature type="compositionally biased region" description="Polar residues" evidence="3">
    <location>
        <begin position="253"/>
        <end position="280"/>
    </location>
</feature>
<feature type="compositionally biased region" description="Basic residues" evidence="3">
    <location>
        <begin position="295"/>
        <end position="306"/>
    </location>
</feature>
<feature type="compositionally biased region" description="Polar residues" evidence="3">
    <location>
        <begin position="361"/>
        <end position="378"/>
    </location>
</feature>
<feature type="glycosylation site" description="N-linked (GlcNAc...) asparagine" evidence="1">
    <location>
        <position position="13"/>
    </location>
</feature>
<feature type="glycosylation site" description="N-linked (GlcNAc...) asparagine" evidence="1">
    <location>
        <position position="198"/>
    </location>
</feature>
<feature type="disulfide bond" evidence="2">
    <location>
        <begin position="124"/>
        <end position="203"/>
    </location>
</feature>
<accession>Q25321</accession>
<proteinExistence type="evidence at protein level"/>
<keyword id="KW-1003">Cell membrane</keyword>
<keyword id="KW-1015">Disulfide bond</keyword>
<keyword id="KW-0297">G-protein coupled receptor</keyword>
<keyword id="KW-0325">Glycoprotein</keyword>
<keyword id="KW-0472">Membrane</keyword>
<keyword id="KW-0675">Receptor</keyword>
<keyword id="KW-0807">Transducer</keyword>
<keyword id="KW-0812">Transmembrane</keyword>
<keyword id="KW-1133">Transmembrane helix</keyword>
<sequence length="484" mass="53531">MVRVELQAASLMNGSSAAEEPQDALVGGDACGGRRPPSVLGVRLAVPEWEVAVTAVSLSLIILITIVGNVLVVLSVFTYKPLRIVQNFFIVSLAVADLTVAVLVMPFNVAYSLIQRWVFGIVVCKMWLTCDVLCCTASILNLCAIALDRYWAITDPINYAQKRTLRRVLAMIAGVWLLSGVISSPPLIGWNDWPMEFNDTTPCQLTEEQGYVIYSSLGSFFIPLFIMTIVYVEIFIATKRRLRERAKASKLNSAMKQQMAAQAVPSSVPSHDQESVSSETNHNELPPPPAPPSKEKRRKTKKKSKKKEQAAEEGRFLAPAMVAEDSVTDNSVSVGPVARNHLAEDGYTCTTTTTTTTTTTAVTDSPRSRTASQKGSTAPPTPVQPKSIPVYQFIEEKQRISLSKERRAARTLGIIMGVFVVCWLPFFLMYVIVPFCNPSCKPSPKLVNFITWLGYINSALNPIIYTIFNLDFRRAFKKLLHFKT</sequence>
<evidence type="ECO:0000255" key="1"/>
<evidence type="ECO:0000255" key="2">
    <source>
        <dbReference type="PROSITE-ProRule" id="PRU00521"/>
    </source>
</evidence>
<evidence type="ECO:0000256" key="3">
    <source>
        <dbReference type="SAM" id="MobiDB-lite"/>
    </source>
</evidence>
<gene>
    <name type="primary">GCR1</name>
</gene>
<comment type="function">
    <text>G-protein coupled receptor for tyramine, a known neurotransmitter and neuromodulator and direct precursor of octopamine. The rank order of potency for agonists of this receptor is tyramine &gt; naphazoline &gt; tolazoline &gt; DL-octopamine &gt; dopamine &gt; epinephrine &gt; 5-hydroxytryptamine. For antagonists, the rank order is yohimbine &gt; chlorpromazine &gt; mianserin &gt; phentolamine &gt; metoclopramide.</text>
</comment>
<comment type="subcellular location">
    <subcellularLocation>
        <location>Cell membrane</location>
        <topology>Multi-pass membrane protein</topology>
    </subcellularLocation>
</comment>
<comment type="tissue specificity">
    <text>Present mainly in the central nervous system, especially in the supra- and subesophageal, thoracic and abdominal ganglia. Not found in the distal part of optic lobes.</text>
</comment>
<comment type="developmental stage">
    <text>Expressed in the nervous system by the first larval stage.</text>
</comment>
<comment type="similarity">
    <text evidence="2">Belongs to the G-protein coupled receptor 1 family.</text>
</comment>
<dbReference type="EMBL" id="X69520">
    <property type="protein sequence ID" value="CAA49268.1"/>
    <property type="molecule type" value="mRNA"/>
</dbReference>
<dbReference type="PIR" id="S58868">
    <property type="entry name" value="S58868"/>
</dbReference>
<dbReference type="SMR" id="Q25321"/>
<dbReference type="GlyCosmos" id="Q25321">
    <property type="glycosylation" value="2 sites, No reported glycans"/>
</dbReference>
<dbReference type="GO" id="GO:0005886">
    <property type="term" value="C:plasma membrane"/>
    <property type="evidence" value="ECO:0007669"/>
    <property type="project" value="UniProtKB-SubCell"/>
</dbReference>
<dbReference type="GO" id="GO:0004989">
    <property type="term" value="F:octopamine receptor activity"/>
    <property type="evidence" value="ECO:0007669"/>
    <property type="project" value="InterPro"/>
</dbReference>
<dbReference type="CDD" id="cd15060">
    <property type="entry name" value="7tmA_tyramine_octopamine_R-like"/>
    <property type="match status" value="1"/>
</dbReference>
<dbReference type="FunFam" id="1.20.1070.10:FF:000248">
    <property type="entry name" value="5-hydroxytryptamine receptor 1A-beta"/>
    <property type="match status" value="1"/>
</dbReference>
<dbReference type="Gene3D" id="1.20.1070.10">
    <property type="entry name" value="Rhodopsin 7-helix transmembrane proteins"/>
    <property type="match status" value="2"/>
</dbReference>
<dbReference type="InterPro" id="IPR000276">
    <property type="entry name" value="GPCR_Rhodpsn"/>
</dbReference>
<dbReference type="InterPro" id="IPR017452">
    <property type="entry name" value="GPCR_Rhodpsn_7TM"/>
</dbReference>
<dbReference type="InterPro" id="IPR002002">
    <property type="entry name" value="Octopmn_rcpt"/>
</dbReference>
<dbReference type="PANTHER" id="PTHR24248">
    <property type="entry name" value="ADRENERGIC RECEPTOR-RELATED G-PROTEIN COUPLED RECEPTOR"/>
    <property type="match status" value="1"/>
</dbReference>
<dbReference type="PANTHER" id="PTHR24248:SF174">
    <property type="entry name" value="TYRAMINE_OCTOPAMINE RECEPTOR"/>
    <property type="match status" value="1"/>
</dbReference>
<dbReference type="Pfam" id="PF00001">
    <property type="entry name" value="7tm_1"/>
    <property type="match status" value="1"/>
</dbReference>
<dbReference type="PRINTS" id="PR00237">
    <property type="entry name" value="GPCRRHODOPSN"/>
</dbReference>
<dbReference type="PRINTS" id="PR00664">
    <property type="entry name" value="OCTOPAMINER"/>
</dbReference>
<dbReference type="SMART" id="SM01381">
    <property type="entry name" value="7TM_GPCR_Srsx"/>
    <property type="match status" value="1"/>
</dbReference>
<dbReference type="SUPFAM" id="SSF81321">
    <property type="entry name" value="Family A G protein-coupled receptor-like"/>
    <property type="match status" value="1"/>
</dbReference>
<dbReference type="PROSITE" id="PS00237">
    <property type="entry name" value="G_PROTEIN_RECEP_F1_1"/>
    <property type="match status" value="1"/>
</dbReference>
<dbReference type="PROSITE" id="PS50262">
    <property type="entry name" value="G_PROTEIN_RECEP_F1_2"/>
    <property type="match status" value="1"/>
</dbReference>
<reference key="1">
    <citation type="journal article" date="1995" name="J. Neurochem.">
        <title>Characterization of a cloned locust tyramine receptor cDNA by functional expression in permanently transformed Drosophila S2 cells.</title>
        <authorList>
            <person name="Vanden Broeck J.J.M."/>
            <person name="Vulsteke V."/>
            <person name="Huybrechts R."/>
            <person name="de Loof A."/>
        </authorList>
    </citation>
    <scope>NUCLEOTIDE SEQUENCE [MRNA]</scope>
    <scope>CHARACTERIZATION</scope>
    <source>
        <tissue>Neuron</tissue>
    </source>
</reference>
<protein>
    <recommendedName>
        <fullName>Tyramine receptor 1</fullName>
    </recommendedName>
    <alternativeName>
        <fullName>Tyr-Loc1</fullName>
    </alternativeName>
</protein>